<name>RL31_BRASB</name>
<evidence type="ECO:0000255" key="1">
    <source>
        <dbReference type="HAMAP-Rule" id="MF_00501"/>
    </source>
</evidence>
<evidence type="ECO:0000305" key="2"/>
<reference key="1">
    <citation type="journal article" date="2007" name="Science">
        <title>Legumes symbioses: absence of nod genes in photosynthetic bradyrhizobia.</title>
        <authorList>
            <person name="Giraud E."/>
            <person name="Moulin L."/>
            <person name="Vallenet D."/>
            <person name="Barbe V."/>
            <person name="Cytryn E."/>
            <person name="Avarre J.-C."/>
            <person name="Jaubert M."/>
            <person name="Simon D."/>
            <person name="Cartieaux F."/>
            <person name="Prin Y."/>
            <person name="Bena G."/>
            <person name="Hannibal L."/>
            <person name="Fardoux J."/>
            <person name="Kojadinovic M."/>
            <person name="Vuillet L."/>
            <person name="Lajus A."/>
            <person name="Cruveiller S."/>
            <person name="Rouy Z."/>
            <person name="Mangenot S."/>
            <person name="Segurens B."/>
            <person name="Dossat C."/>
            <person name="Franck W.L."/>
            <person name="Chang W.-S."/>
            <person name="Saunders E."/>
            <person name="Bruce D."/>
            <person name="Richardson P."/>
            <person name="Normand P."/>
            <person name="Dreyfus B."/>
            <person name="Pignol D."/>
            <person name="Stacey G."/>
            <person name="Emerich D."/>
            <person name="Vermeglio A."/>
            <person name="Medigue C."/>
            <person name="Sadowsky M."/>
        </authorList>
    </citation>
    <scope>NUCLEOTIDE SEQUENCE [LARGE SCALE GENOMIC DNA]</scope>
    <source>
        <strain>BTAi1 / ATCC BAA-1182</strain>
    </source>
</reference>
<dbReference type="EMBL" id="CP000494">
    <property type="protein sequence ID" value="ABQ38830.1"/>
    <property type="molecule type" value="Genomic_DNA"/>
</dbReference>
<dbReference type="RefSeq" id="WP_012046762.1">
    <property type="nucleotide sequence ID" value="NC_009485.1"/>
</dbReference>
<dbReference type="SMR" id="A5ERN6"/>
<dbReference type="STRING" id="288000.BBta_6943"/>
<dbReference type="KEGG" id="bbt:BBta_6943"/>
<dbReference type="eggNOG" id="COG0254">
    <property type="taxonomic scope" value="Bacteria"/>
</dbReference>
<dbReference type="HOGENOM" id="CLU_114306_3_2_5"/>
<dbReference type="OrthoDB" id="9803251at2"/>
<dbReference type="Proteomes" id="UP000000246">
    <property type="component" value="Chromosome"/>
</dbReference>
<dbReference type="GO" id="GO:1990904">
    <property type="term" value="C:ribonucleoprotein complex"/>
    <property type="evidence" value="ECO:0007669"/>
    <property type="project" value="UniProtKB-KW"/>
</dbReference>
<dbReference type="GO" id="GO:0005840">
    <property type="term" value="C:ribosome"/>
    <property type="evidence" value="ECO:0007669"/>
    <property type="project" value="UniProtKB-KW"/>
</dbReference>
<dbReference type="GO" id="GO:0019843">
    <property type="term" value="F:rRNA binding"/>
    <property type="evidence" value="ECO:0007669"/>
    <property type="project" value="UniProtKB-KW"/>
</dbReference>
<dbReference type="GO" id="GO:0003735">
    <property type="term" value="F:structural constituent of ribosome"/>
    <property type="evidence" value="ECO:0007669"/>
    <property type="project" value="InterPro"/>
</dbReference>
<dbReference type="GO" id="GO:0006412">
    <property type="term" value="P:translation"/>
    <property type="evidence" value="ECO:0007669"/>
    <property type="project" value="UniProtKB-UniRule"/>
</dbReference>
<dbReference type="Gene3D" id="4.10.830.30">
    <property type="entry name" value="Ribosomal protein L31"/>
    <property type="match status" value="1"/>
</dbReference>
<dbReference type="HAMAP" id="MF_00501">
    <property type="entry name" value="Ribosomal_bL31_1"/>
    <property type="match status" value="1"/>
</dbReference>
<dbReference type="InterPro" id="IPR034704">
    <property type="entry name" value="Ribosomal_bL28/bL31-like_sf"/>
</dbReference>
<dbReference type="InterPro" id="IPR002150">
    <property type="entry name" value="Ribosomal_bL31"/>
</dbReference>
<dbReference type="InterPro" id="IPR027491">
    <property type="entry name" value="Ribosomal_bL31_A"/>
</dbReference>
<dbReference type="InterPro" id="IPR042105">
    <property type="entry name" value="Ribosomal_bL31_sf"/>
</dbReference>
<dbReference type="NCBIfam" id="TIGR00105">
    <property type="entry name" value="L31"/>
    <property type="match status" value="1"/>
</dbReference>
<dbReference type="NCBIfam" id="NF001809">
    <property type="entry name" value="PRK00528.1"/>
    <property type="match status" value="1"/>
</dbReference>
<dbReference type="PANTHER" id="PTHR33280">
    <property type="entry name" value="50S RIBOSOMAL PROTEIN L31, CHLOROPLASTIC"/>
    <property type="match status" value="1"/>
</dbReference>
<dbReference type="PANTHER" id="PTHR33280:SF6">
    <property type="entry name" value="LARGE RIBOSOMAL SUBUNIT PROTEIN BL31A"/>
    <property type="match status" value="1"/>
</dbReference>
<dbReference type="Pfam" id="PF01197">
    <property type="entry name" value="Ribosomal_L31"/>
    <property type="match status" value="1"/>
</dbReference>
<dbReference type="PRINTS" id="PR01249">
    <property type="entry name" value="RIBOSOMALL31"/>
</dbReference>
<dbReference type="SUPFAM" id="SSF143800">
    <property type="entry name" value="L28p-like"/>
    <property type="match status" value="1"/>
</dbReference>
<dbReference type="PROSITE" id="PS01143">
    <property type="entry name" value="RIBOSOMAL_L31"/>
    <property type="match status" value="1"/>
</dbReference>
<protein>
    <recommendedName>
        <fullName evidence="1">Large ribosomal subunit protein bL31</fullName>
    </recommendedName>
    <alternativeName>
        <fullName evidence="2">50S ribosomal protein L31</fullName>
    </alternativeName>
</protein>
<accession>A5ERN6</accession>
<proteinExistence type="inferred from homology"/>
<organism>
    <name type="scientific">Bradyrhizobium sp. (strain BTAi1 / ATCC BAA-1182)</name>
    <dbReference type="NCBI Taxonomy" id="288000"/>
    <lineage>
        <taxon>Bacteria</taxon>
        <taxon>Pseudomonadati</taxon>
        <taxon>Pseudomonadota</taxon>
        <taxon>Alphaproteobacteria</taxon>
        <taxon>Hyphomicrobiales</taxon>
        <taxon>Nitrobacteraceae</taxon>
        <taxon>Bradyrhizobium</taxon>
    </lineage>
</organism>
<comment type="function">
    <text evidence="1">Binds the 23S rRNA.</text>
</comment>
<comment type="subunit">
    <text evidence="1">Part of the 50S ribosomal subunit.</text>
</comment>
<comment type="similarity">
    <text evidence="1">Belongs to the bacterial ribosomal protein bL31 family. Type A subfamily.</text>
</comment>
<gene>
    <name evidence="1" type="primary">rpmE</name>
    <name type="ordered locus">BBta_6943</name>
</gene>
<keyword id="KW-1185">Reference proteome</keyword>
<keyword id="KW-0687">Ribonucleoprotein</keyword>
<keyword id="KW-0689">Ribosomal protein</keyword>
<keyword id="KW-0694">RNA-binding</keyword>
<keyword id="KW-0699">rRNA-binding</keyword>
<sequence>MKADIHPNYHTITVVMTDGTEYQTRSTWGKEGDKLNLDIDPKSHPAWTGGTQQIMDRGGRVSRFQKKFQGFLKKD</sequence>
<feature type="chain" id="PRO_1000126570" description="Large ribosomal subunit protein bL31">
    <location>
        <begin position="1"/>
        <end position="75"/>
    </location>
</feature>